<dbReference type="EC" id="5.3.1.16" evidence="1"/>
<dbReference type="EMBL" id="CP001215">
    <property type="protein sequence ID" value="ACP17193.1"/>
    <property type="molecule type" value="Genomic_DNA"/>
</dbReference>
<dbReference type="RefSeq" id="WP_000402281.1">
    <property type="nucleotide sequence ID" value="NC_012581.1"/>
</dbReference>
<dbReference type="SMR" id="C3L9P8"/>
<dbReference type="GeneID" id="45021408"/>
<dbReference type="KEGG" id="bah:BAMEG_3166"/>
<dbReference type="HOGENOM" id="CLU_048577_1_1_9"/>
<dbReference type="UniPathway" id="UPA00031">
    <property type="reaction ID" value="UER00009"/>
</dbReference>
<dbReference type="GO" id="GO:0005737">
    <property type="term" value="C:cytoplasm"/>
    <property type="evidence" value="ECO:0007669"/>
    <property type="project" value="UniProtKB-SubCell"/>
</dbReference>
<dbReference type="GO" id="GO:0003949">
    <property type="term" value="F:1-(5-phosphoribosyl)-5-[(5-phosphoribosylamino)methylideneamino]imidazole-4-carboxamide isomerase activity"/>
    <property type="evidence" value="ECO:0007669"/>
    <property type="project" value="UniProtKB-UniRule"/>
</dbReference>
<dbReference type="GO" id="GO:0000105">
    <property type="term" value="P:L-histidine biosynthetic process"/>
    <property type="evidence" value="ECO:0007669"/>
    <property type="project" value="UniProtKB-UniRule"/>
</dbReference>
<dbReference type="GO" id="GO:0000162">
    <property type="term" value="P:L-tryptophan biosynthetic process"/>
    <property type="evidence" value="ECO:0007669"/>
    <property type="project" value="TreeGrafter"/>
</dbReference>
<dbReference type="CDD" id="cd04732">
    <property type="entry name" value="HisA"/>
    <property type="match status" value="1"/>
</dbReference>
<dbReference type="FunFam" id="3.20.20.70:FF:000009">
    <property type="entry name" value="1-(5-phosphoribosyl)-5-[(5-phosphoribosylamino)methylideneamino] imidazole-4-carboxamide isomerase"/>
    <property type="match status" value="1"/>
</dbReference>
<dbReference type="Gene3D" id="3.20.20.70">
    <property type="entry name" value="Aldolase class I"/>
    <property type="match status" value="1"/>
</dbReference>
<dbReference type="HAMAP" id="MF_01014">
    <property type="entry name" value="HisA"/>
    <property type="match status" value="1"/>
</dbReference>
<dbReference type="InterPro" id="IPR013785">
    <property type="entry name" value="Aldolase_TIM"/>
</dbReference>
<dbReference type="InterPro" id="IPR006062">
    <property type="entry name" value="His_biosynth"/>
</dbReference>
<dbReference type="InterPro" id="IPR006063">
    <property type="entry name" value="HisA_bact_arch"/>
</dbReference>
<dbReference type="InterPro" id="IPR044524">
    <property type="entry name" value="Isoase_HisA-like"/>
</dbReference>
<dbReference type="InterPro" id="IPR023016">
    <property type="entry name" value="Isoase_HisA-like_bact"/>
</dbReference>
<dbReference type="InterPro" id="IPR011060">
    <property type="entry name" value="RibuloseP-bd_barrel"/>
</dbReference>
<dbReference type="NCBIfam" id="TIGR00007">
    <property type="entry name" value="1-(5-phosphoribosyl)-5-[(5-phosphoribosylamino)methylideneamino]imidazole-4-carboxamide isomerase"/>
    <property type="match status" value="1"/>
</dbReference>
<dbReference type="PANTHER" id="PTHR43090">
    <property type="entry name" value="1-(5-PHOSPHORIBOSYL)-5-[(5-PHOSPHORIBOSYLAMINO)METHYLIDENEAMINO] IMIDAZOLE-4-CARBOXAMIDE ISOMERASE"/>
    <property type="match status" value="1"/>
</dbReference>
<dbReference type="PANTHER" id="PTHR43090:SF2">
    <property type="entry name" value="1-(5-PHOSPHORIBOSYL)-5-[(5-PHOSPHORIBOSYLAMINO)METHYLIDENEAMINO] IMIDAZOLE-4-CARBOXAMIDE ISOMERASE"/>
    <property type="match status" value="1"/>
</dbReference>
<dbReference type="Pfam" id="PF00977">
    <property type="entry name" value="His_biosynth"/>
    <property type="match status" value="1"/>
</dbReference>
<dbReference type="SUPFAM" id="SSF51366">
    <property type="entry name" value="Ribulose-phoshate binding barrel"/>
    <property type="match status" value="1"/>
</dbReference>
<organism>
    <name type="scientific">Bacillus anthracis (strain CDC 684 / NRRL 3495)</name>
    <dbReference type="NCBI Taxonomy" id="568206"/>
    <lineage>
        <taxon>Bacteria</taxon>
        <taxon>Bacillati</taxon>
        <taxon>Bacillota</taxon>
        <taxon>Bacilli</taxon>
        <taxon>Bacillales</taxon>
        <taxon>Bacillaceae</taxon>
        <taxon>Bacillus</taxon>
        <taxon>Bacillus cereus group</taxon>
    </lineage>
</organism>
<evidence type="ECO:0000255" key="1">
    <source>
        <dbReference type="HAMAP-Rule" id="MF_01014"/>
    </source>
</evidence>
<protein>
    <recommendedName>
        <fullName evidence="1">1-(5-phosphoribosyl)-5-[(5-phosphoribosylamino)methylideneamino] imidazole-4-carboxamide isomerase</fullName>
        <ecNumber evidence="1">5.3.1.16</ecNumber>
    </recommendedName>
    <alternativeName>
        <fullName evidence="1">Phosphoribosylformimino-5-aminoimidazole carboxamide ribotide isomerase</fullName>
    </alternativeName>
</protein>
<accession>C3L9P8</accession>
<comment type="catalytic activity">
    <reaction evidence="1">
        <text>1-(5-phospho-beta-D-ribosyl)-5-[(5-phospho-beta-D-ribosylamino)methylideneamino]imidazole-4-carboxamide = 5-[(5-phospho-1-deoxy-D-ribulos-1-ylimino)methylamino]-1-(5-phospho-beta-D-ribosyl)imidazole-4-carboxamide</text>
        <dbReference type="Rhea" id="RHEA:15469"/>
        <dbReference type="ChEBI" id="CHEBI:58435"/>
        <dbReference type="ChEBI" id="CHEBI:58525"/>
        <dbReference type="EC" id="5.3.1.16"/>
    </reaction>
</comment>
<comment type="pathway">
    <text evidence="1">Amino-acid biosynthesis; L-histidine biosynthesis; L-histidine from 5-phospho-alpha-D-ribose 1-diphosphate: step 4/9.</text>
</comment>
<comment type="subcellular location">
    <subcellularLocation>
        <location evidence="1">Cytoplasm</location>
    </subcellularLocation>
</comment>
<comment type="similarity">
    <text evidence="1">Belongs to the HisA/HisF family.</text>
</comment>
<sequence>MEIFPAIDLKEGRCVRLYQGEFSKETVMNEDPVAQAIIFEKFGAKRLHIVDLDGAVAGESLNLSVIERICKAVRIPVQVGGGIRSLVAVEKLFSVGVDKVILGTAALYDKTFLEEAVLLYKEKIIVGIDAKNGFVATRGWLDVSEISYIDLAKQMEKIGVQTIVFTDISKDGTLAGPNIEQLELLQKSVAIRLIASGGVASIQDVKKLNDMNIYGVIIGKALYEKTIDLEEVVEVTKLC</sequence>
<reference key="1">
    <citation type="submission" date="2008-10" db="EMBL/GenBank/DDBJ databases">
        <title>Genome sequence of Bacillus anthracis str. CDC 684.</title>
        <authorList>
            <person name="Dodson R.J."/>
            <person name="Munk A.C."/>
            <person name="Brettin T."/>
            <person name="Bruce D."/>
            <person name="Detter C."/>
            <person name="Tapia R."/>
            <person name="Han C."/>
            <person name="Sutton G."/>
            <person name="Sims D."/>
        </authorList>
    </citation>
    <scope>NUCLEOTIDE SEQUENCE [LARGE SCALE GENOMIC DNA]</scope>
    <source>
        <strain>CDC 684 / NRRL 3495</strain>
    </source>
</reference>
<name>HIS4_BACAC</name>
<keyword id="KW-0028">Amino-acid biosynthesis</keyword>
<keyword id="KW-0963">Cytoplasm</keyword>
<keyword id="KW-0368">Histidine biosynthesis</keyword>
<keyword id="KW-0413">Isomerase</keyword>
<feature type="chain" id="PRO_1000148950" description="1-(5-phosphoribosyl)-5-[(5-phosphoribosylamino)methylideneamino] imidazole-4-carboxamide isomerase">
    <location>
        <begin position="1"/>
        <end position="239"/>
    </location>
</feature>
<feature type="active site" description="Proton acceptor" evidence="1">
    <location>
        <position position="8"/>
    </location>
</feature>
<feature type="active site" description="Proton donor" evidence="1">
    <location>
        <position position="129"/>
    </location>
</feature>
<gene>
    <name evidence="1" type="primary">hisA</name>
    <name type="ordered locus">BAMEG_3166</name>
</gene>
<proteinExistence type="inferred from homology"/>